<sequence>MELIEKHVSFGGWQNMYRHYSQSLKCEMNVGVYLPPKAANEKLPVLYWLSGLTCNEQNFITKSGMQRYAAEHNIIVVAPDTSPRGSHVADADRYDLGQGAGFYLNATQAPWNEHYKMYDYIRNELPDLVMHHFPATAKKSISGHSMGGLGALVLALRNPDEYVSVSAFSPIVSPSQVPWGQQAFAAYLAENKDAWLDYDPVSLISQGQRVAEIMVDQGLSDDFYAEQLRTPNLEKICQEMNIKTLIRYHEGYDHSYYFVSSFIGEHIAYHANKLNMR</sequence>
<keyword id="KW-0378">Hydrolase</keyword>
<keyword id="KW-1185">Reference proteome</keyword>
<keyword id="KW-0719">Serine esterase</keyword>
<organism>
    <name type="scientific">Escherichia coli (strain K12)</name>
    <dbReference type="NCBI Taxonomy" id="83333"/>
    <lineage>
        <taxon>Bacteria</taxon>
        <taxon>Pseudomonadati</taxon>
        <taxon>Pseudomonadota</taxon>
        <taxon>Gammaproteobacteria</taxon>
        <taxon>Enterobacterales</taxon>
        <taxon>Enterobacteriaceae</taxon>
        <taxon>Escherichia</taxon>
    </lineage>
</organism>
<dbReference type="EC" id="3.1.2.12"/>
<dbReference type="EMBL" id="D85613">
    <property type="status" value="NOT_ANNOTATED_CDS"/>
    <property type="molecule type" value="Genomic_DNA"/>
</dbReference>
<dbReference type="EMBL" id="U73857">
    <property type="protein sequence ID" value="AAB18080.1"/>
    <property type="molecule type" value="Genomic_DNA"/>
</dbReference>
<dbReference type="EMBL" id="U00096">
    <property type="protein sequence ID" value="AAC73458.1"/>
    <property type="molecule type" value="Genomic_DNA"/>
</dbReference>
<dbReference type="EMBL" id="AP009048">
    <property type="protein sequence ID" value="BAE76137.1"/>
    <property type="molecule type" value="Genomic_DNA"/>
</dbReference>
<dbReference type="PIR" id="C64763">
    <property type="entry name" value="C64763"/>
</dbReference>
<dbReference type="RefSeq" id="NP_414889.1">
    <property type="nucleotide sequence ID" value="NC_000913.3"/>
</dbReference>
<dbReference type="SMR" id="P51025"/>
<dbReference type="BioGRID" id="4261809">
    <property type="interactions" value="24"/>
</dbReference>
<dbReference type="DIP" id="DIP-11274N"/>
<dbReference type="FunCoup" id="P51025">
    <property type="interactions" value="646"/>
</dbReference>
<dbReference type="IntAct" id="P51025">
    <property type="interactions" value="5"/>
</dbReference>
<dbReference type="STRING" id="511145.b0355"/>
<dbReference type="ESTHER" id="ecoli-yaim">
    <property type="family name" value="A85-EsteraseD-FGH"/>
</dbReference>
<dbReference type="MEROPS" id="S09.940"/>
<dbReference type="jPOST" id="P51025"/>
<dbReference type="PaxDb" id="511145-b0355"/>
<dbReference type="EnsemblBacteria" id="AAC73458">
    <property type="protein sequence ID" value="AAC73458"/>
    <property type="gene ID" value="b0355"/>
</dbReference>
<dbReference type="GeneID" id="944991"/>
<dbReference type="KEGG" id="ecj:JW0346"/>
<dbReference type="KEGG" id="eco:b0355"/>
<dbReference type="PATRIC" id="fig|1411691.4.peg.1923"/>
<dbReference type="EchoBASE" id="EB3080"/>
<dbReference type="eggNOG" id="COG0627">
    <property type="taxonomic scope" value="Bacteria"/>
</dbReference>
<dbReference type="HOGENOM" id="CLU_056472_0_0_6"/>
<dbReference type="InParanoid" id="P51025"/>
<dbReference type="OMA" id="GWQDVYQ"/>
<dbReference type="OrthoDB" id="9782200at2"/>
<dbReference type="PhylomeDB" id="P51025"/>
<dbReference type="BioCyc" id="EcoCyc:G6208-MONOMER"/>
<dbReference type="BioCyc" id="MetaCyc:G6208-MONOMER"/>
<dbReference type="SABIO-RK" id="P51025"/>
<dbReference type="PRO" id="PR:P51025"/>
<dbReference type="Proteomes" id="UP000000625">
    <property type="component" value="Chromosome"/>
</dbReference>
<dbReference type="GO" id="GO:0005829">
    <property type="term" value="C:cytosol"/>
    <property type="evidence" value="ECO:0000318"/>
    <property type="project" value="GO_Central"/>
</dbReference>
<dbReference type="GO" id="GO:0052689">
    <property type="term" value="F:carboxylic ester hydrolase activity"/>
    <property type="evidence" value="ECO:0007669"/>
    <property type="project" value="UniProtKB-KW"/>
</dbReference>
<dbReference type="GO" id="GO:0018738">
    <property type="term" value="F:S-formylglutathione hydrolase activity"/>
    <property type="evidence" value="ECO:0000314"/>
    <property type="project" value="EcoCyc"/>
</dbReference>
<dbReference type="GO" id="GO:0046294">
    <property type="term" value="P:formaldehyde catabolic process"/>
    <property type="evidence" value="ECO:0007669"/>
    <property type="project" value="InterPro"/>
</dbReference>
<dbReference type="GO" id="GO:0046292">
    <property type="term" value="P:formaldehyde metabolic process"/>
    <property type="evidence" value="ECO:0000315"/>
    <property type="project" value="EcoCyc"/>
</dbReference>
<dbReference type="FunFam" id="3.40.50.1820:FF:000002">
    <property type="entry name" value="S-formylglutathione hydrolase"/>
    <property type="match status" value="1"/>
</dbReference>
<dbReference type="Gene3D" id="3.40.50.1820">
    <property type="entry name" value="alpha/beta hydrolase"/>
    <property type="match status" value="1"/>
</dbReference>
<dbReference type="InterPro" id="IPR029058">
    <property type="entry name" value="AB_hydrolase_fold"/>
</dbReference>
<dbReference type="InterPro" id="IPR000801">
    <property type="entry name" value="Esterase-like"/>
</dbReference>
<dbReference type="InterPro" id="IPR014186">
    <property type="entry name" value="S-formylglutathione_hydrol"/>
</dbReference>
<dbReference type="NCBIfam" id="TIGR02821">
    <property type="entry name" value="fghA_ester_D"/>
    <property type="match status" value="1"/>
</dbReference>
<dbReference type="PANTHER" id="PTHR10061">
    <property type="entry name" value="S-FORMYLGLUTATHIONE HYDROLASE"/>
    <property type="match status" value="1"/>
</dbReference>
<dbReference type="PANTHER" id="PTHR10061:SF0">
    <property type="entry name" value="S-FORMYLGLUTATHIONE HYDROLASE"/>
    <property type="match status" value="1"/>
</dbReference>
<dbReference type="Pfam" id="PF00756">
    <property type="entry name" value="Esterase"/>
    <property type="match status" value="1"/>
</dbReference>
<dbReference type="SUPFAM" id="SSF53474">
    <property type="entry name" value="alpha/beta-Hydrolases"/>
    <property type="match status" value="1"/>
</dbReference>
<reference key="1">
    <citation type="submission" date="1996-05" db="EMBL/GenBank/DDBJ databases">
        <authorList>
            <person name="Nashimoto H."/>
            <person name="Saito N."/>
        </authorList>
    </citation>
    <scope>NUCLEOTIDE SEQUENCE [GENOMIC DNA]</scope>
    <source>
        <strain>K12</strain>
    </source>
</reference>
<reference key="2">
    <citation type="submission" date="1997-01" db="EMBL/GenBank/DDBJ databases">
        <title>Sequence of minutes 4-25 of Escherichia coli.</title>
        <authorList>
            <person name="Chung E."/>
            <person name="Allen E."/>
            <person name="Araujo R."/>
            <person name="Aparicio A.M."/>
            <person name="Davis K."/>
            <person name="Duncan M."/>
            <person name="Federspiel N."/>
            <person name="Hyman R."/>
            <person name="Kalman S."/>
            <person name="Komp C."/>
            <person name="Kurdi O."/>
            <person name="Lew H."/>
            <person name="Lin D."/>
            <person name="Namath A."/>
            <person name="Oefner P."/>
            <person name="Roberts D."/>
            <person name="Schramm S."/>
            <person name="Davis R.W."/>
        </authorList>
    </citation>
    <scope>NUCLEOTIDE SEQUENCE [LARGE SCALE GENOMIC DNA]</scope>
    <source>
        <strain>K12 / MG1655 / ATCC 47076</strain>
    </source>
</reference>
<reference key="3">
    <citation type="journal article" date="1997" name="Science">
        <title>The complete genome sequence of Escherichia coli K-12.</title>
        <authorList>
            <person name="Blattner F.R."/>
            <person name="Plunkett G. III"/>
            <person name="Bloch C.A."/>
            <person name="Perna N.T."/>
            <person name="Burland V."/>
            <person name="Riley M."/>
            <person name="Collado-Vides J."/>
            <person name="Glasner J.D."/>
            <person name="Rode C.K."/>
            <person name="Mayhew G.F."/>
            <person name="Gregor J."/>
            <person name="Davis N.W."/>
            <person name="Kirkpatrick H.A."/>
            <person name="Goeden M.A."/>
            <person name="Rose D.J."/>
            <person name="Mau B."/>
            <person name="Shao Y."/>
        </authorList>
    </citation>
    <scope>NUCLEOTIDE SEQUENCE [LARGE SCALE GENOMIC DNA]</scope>
    <source>
        <strain>K12 / MG1655 / ATCC 47076</strain>
    </source>
</reference>
<reference key="4">
    <citation type="journal article" date="2006" name="Mol. Syst. Biol.">
        <title>Highly accurate genome sequences of Escherichia coli K-12 strains MG1655 and W3110.</title>
        <authorList>
            <person name="Hayashi K."/>
            <person name="Morooka N."/>
            <person name="Yamamoto Y."/>
            <person name="Fujita K."/>
            <person name="Isono K."/>
            <person name="Choi S."/>
            <person name="Ohtsubo E."/>
            <person name="Baba T."/>
            <person name="Wanner B.L."/>
            <person name="Mori H."/>
            <person name="Horiuchi T."/>
        </authorList>
    </citation>
    <scope>NUCLEOTIDE SEQUENCE [LARGE SCALE GENOMIC DNA]</scope>
    <source>
        <strain>K12 / W3110 / ATCC 27325 / DSM 5911</strain>
    </source>
</reference>
<reference key="5">
    <citation type="unpublished observations" date="1996-03">
        <authorList>
            <person name="Rudd K.E."/>
        </authorList>
    </citation>
    <scope>IDENTIFICATION</scope>
</reference>
<reference key="6">
    <citation type="journal article" date="2004" name="J. Bacteriol.">
        <title>Global transcriptional effects of a suppressor tRNA and the inactivation of the regulator frmR.</title>
        <authorList>
            <person name="Herring C.D."/>
            <person name="Blattner F.R."/>
        </authorList>
    </citation>
    <scope>INDUCTION</scope>
    <source>
        <strain>K12 / MG1655 / ATCC 47076</strain>
    </source>
</reference>
<reference key="7">
    <citation type="journal article" date="2006" name="J. Biol. Chem.">
        <title>Molecular basis of formaldehyde detoxification. Characterization of two S-formylglutathione hydrolases from Escherichia coli, FrmB and YeiG.</title>
        <authorList>
            <person name="Gonzalez C.F."/>
            <person name="Proudfoot M."/>
            <person name="Brown G."/>
            <person name="Korniyenko Y."/>
            <person name="Mori H."/>
            <person name="Savchenko A.V."/>
            <person name="Yakunin A.F."/>
        </authorList>
    </citation>
    <scope>FUNCTION</scope>
    <scope>CATALYTIC ACTIVITY</scope>
    <scope>ACTIVITY REGULATION</scope>
    <scope>BIOPHYSICOCHEMICAL PROPERTIES</scope>
    <scope>INDUCTION</scope>
</reference>
<proteinExistence type="evidence at protein level"/>
<protein>
    <recommendedName>
        <fullName>S-formylglutathione hydrolase FrmB</fullName>
        <shortName>FGH</shortName>
        <ecNumber>3.1.2.12</ecNumber>
    </recommendedName>
</protein>
<evidence type="ECO:0000250" key="1"/>
<evidence type="ECO:0000269" key="2">
    <source>
    </source>
</evidence>
<evidence type="ECO:0000269" key="3">
    <source>
    </source>
</evidence>
<evidence type="ECO:0000305" key="4"/>
<name>SFGH1_ECOLI</name>
<accession>P51025</accession>
<accession>P77317</accession>
<accession>Q2MC69</accession>
<feature type="chain" id="PRO_0000210343" description="S-formylglutathione hydrolase FrmB">
    <location>
        <begin position="1"/>
        <end position="277"/>
    </location>
</feature>
<feature type="active site" description="Charge relay system" evidence="1">
    <location>
        <position position="145"/>
    </location>
</feature>
<feature type="active site" description="Charge relay system" evidence="1">
    <location>
        <position position="221"/>
    </location>
</feature>
<feature type="active site" description="Charge relay system" evidence="1">
    <location>
        <position position="254"/>
    </location>
</feature>
<gene>
    <name type="primary">frmB</name>
    <name type="synonym">yaiM</name>
    <name type="ordered locus">b0355</name>
    <name type="ordered locus">JW0346</name>
</gene>
<comment type="function">
    <text evidence="3">Serine hydrolase involved in the detoxification of formaldehyde. Hydrolyzes S-formylglutathione to glutathione and formate. Also shows esterase activity against two pNP-esters (pNP-acetate and pNP-propionate), alpha-naphthyl acetate and lactoylglutathione.</text>
</comment>
<comment type="catalytic activity">
    <reaction evidence="3">
        <text>S-formylglutathione + H2O = formate + glutathione + H(+)</text>
        <dbReference type="Rhea" id="RHEA:14961"/>
        <dbReference type="ChEBI" id="CHEBI:15377"/>
        <dbReference type="ChEBI" id="CHEBI:15378"/>
        <dbReference type="ChEBI" id="CHEBI:15740"/>
        <dbReference type="ChEBI" id="CHEBI:57688"/>
        <dbReference type="ChEBI" id="CHEBI:57925"/>
        <dbReference type="EC" id="3.1.2.12"/>
    </reaction>
</comment>
<comment type="activity regulation">
    <text evidence="3">Inhibited by the sulfhydryl inhibitors (N-ethylmaleimide, iodoacetate, ZnCl(2) and CuCl(2)).</text>
</comment>
<comment type="biophysicochemical properties">
    <kinetics>
        <KM evidence="3">0.41 mM for S-formylglutathione</KM>
        <KM evidence="3">0.29 mM for pNP-acetate</KM>
        <KM evidence="3">0.83 mM for pNP-propionate</KM>
        <KM evidence="3">0.6 mM for S-lactoylglutathione</KM>
        <Vmax evidence="3">55.0 umol/min/mg enzyme with S-formylglutathione as substrate</Vmax>
        <Vmax evidence="3">0.58 umol/min/mg enzyme with pNP-acetate as substrate</Vmax>
        <Vmax evidence="3">0.27 umol/min/mg enzyme with pNP-propionate as substrate</Vmax>
        <Vmax evidence="3">0.09 umol/min/mg enzyme with S-lactoylglutathione as substrate</Vmax>
    </kinetics>
</comment>
<comment type="induction">
    <text evidence="2 3">Induced by formaldehyde and repressed by FrmR.</text>
</comment>
<comment type="similarity">
    <text evidence="4">Belongs to the esterase D family.</text>
</comment>
<comment type="sequence caution" evidence="4">
    <conflict type="frameshift">
        <sequence resource="EMBL" id="D85613"/>
    </conflict>
</comment>